<protein>
    <recommendedName>
        <fullName>Heme oxygenase 1</fullName>
        <shortName>HO-1</shortName>
        <ecNumber evidence="1">1.14.14.18</ecNumber>
    </recommendedName>
    <component>
        <recommendedName>
            <fullName evidence="1">Heme oxygenase 1 soluble form</fullName>
        </recommendedName>
    </component>
</protein>
<organism>
    <name type="scientific">Pongo abelii</name>
    <name type="common">Sumatran orangutan</name>
    <name type="synonym">Pongo pygmaeus abelii</name>
    <dbReference type="NCBI Taxonomy" id="9601"/>
    <lineage>
        <taxon>Eukaryota</taxon>
        <taxon>Metazoa</taxon>
        <taxon>Chordata</taxon>
        <taxon>Craniata</taxon>
        <taxon>Vertebrata</taxon>
        <taxon>Euteleostomi</taxon>
        <taxon>Mammalia</taxon>
        <taxon>Eutheria</taxon>
        <taxon>Euarchontoglires</taxon>
        <taxon>Primates</taxon>
        <taxon>Haplorrhini</taxon>
        <taxon>Catarrhini</taxon>
        <taxon>Hominidae</taxon>
        <taxon>Pongo</taxon>
    </lineage>
</organism>
<sequence>MERPQPDSMPQDLSEALKEATKEVHTQAENAEFMRNFQKGQVTREGFKLVMASLYHIYVALEEEIEHNKESPVFAPVYFPEELHRKAALEQDLAFWYGPRWQEVIPYTPAMQRYVKRLHEVGRTEPELLVAHAYTRYLGDLSGGQVLKKIAQKALGLPSSGEGLAFFTFPNIASATKFKQLYRSRMNSLEMTPAVRQRVIEEAKTAFLLNIQLFEELQELLTHDTKDQSPSRAPGLRQRASNKAQDSAPVETPRGKTPLNTHSQAPLLRWVLTLSFLVATVAVGLYAM</sequence>
<keyword id="KW-0053">Apoptosis</keyword>
<keyword id="KW-0256">Endoplasmic reticulum</keyword>
<keyword id="KW-0349">Heme</keyword>
<keyword id="KW-0408">Iron</keyword>
<keyword id="KW-0472">Membrane</keyword>
<keyword id="KW-0479">Metal-binding</keyword>
<keyword id="KW-0560">Oxidoreductase</keyword>
<keyword id="KW-0597">Phosphoprotein</keyword>
<keyword id="KW-1185">Reference proteome</keyword>
<keyword id="KW-0812">Transmembrane</keyword>
<keyword id="KW-1133">Transmembrane helix</keyword>
<name>HMOX1_PONAB</name>
<gene>
    <name type="primary">HMOX1</name>
</gene>
<proteinExistence type="evidence at transcript level"/>
<comment type="function">
    <molecule>Heme oxygenase 1</molecule>
    <text evidence="1">Catalyzes the oxidative cleavage of heme at the alpha-methene bridge carbon, released as carbon monoxide (CO), to generate biliverdin IXalpha, while releasing the central heme iron chelate as ferrous iron (By similarity). Affords protection against programmed cell death and this cytoprotective effect relies on its ability to catabolize free heme and prevent it from sensitizing cells to undergo apoptosis (By similarity).</text>
</comment>
<comment type="function">
    <molecule>Heme oxygenase 1 soluble form</molecule>
    <text evidence="1">Catalyzes the oxidative cleavage of heme at the alpha-methene bridge carbon, released as carbon monoxide (CO), to generate biliverdin IXalpha, while releasing the central heme iron chelate as ferrous iron.</text>
</comment>
<comment type="catalytic activity">
    <reaction evidence="1">
        <text>heme b + 3 reduced [NADPH--hemoprotein reductase] + 3 O2 = biliverdin IXalpha + CO + Fe(2+) + 3 oxidized [NADPH--hemoprotein reductase] + 3 H2O + H(+)</text>
        <dbReference type="Rhea" id="RHEA:21764"/>
        <dbReference type="Rhea" id="RHEA-COMP:11964"/>
        <dbReference type="Rhea" id="RHEA-COMP:11965"/>
        <dbReference type="ChEBI" id="CHEBI:15377"/>
        <dbReference type="ChEBI" id="CHEBI:15378"/>
        <dbReference type="ChEBI" id="CHEBI:15379"/>
        <dbReference type="ChEBI" id="CHEBI:17245"/>
        <dbReference type="ChEBI" id="CHEBI:29033"/>
        <dbReference type="ChEBI" id="CHEBI:57618"/>
        <dbReference type="ChEBI" id="CHEBI:57991"/>
        <dbReference type="ChEBI" id="CHEBI:58210"/>
        <dbReference type="ChEBI" id="CHEBI:60344"/>
        <dbReference type="EC" id="1.14.14.18"/>
    </reaction>
    <physiologicalReaction direction="left-to-right" evidence="1">
        <dbReference type="Rhea" id="RHEA:21765"/>
    </physiologicalReaction>
</comment>
<comment type="subunit">
    <text evidence="2">Homodimer and higher order homooligomer. Oligomerization is crucial for its stability and function in the endoplasmic reticulum. Interacts with FLVCR2; this interaction is potentiated in the presence of heme.</text>
</comment>
<comment type="subcellular location">
    <subcellularLocation>
        <location evidence="1">Endoplasmic reticulum membrane</location>
        <topology evidence="3">Single-pass type IV membrane protein</topology>
        <orientation evidence="1">Cytoplasmic side</orientation>
    </subcellularLocation>
</comment>
<comment type="domain">
    <text evidence="1">The transmembrane domain is necessary for its oligomerization.</text>
</comment>
<comment type="PTM">
    <text evidence="1">A soluble form arises by proteolytic removal of the membrane anchor.</text>
</comment>
<comment type="similarity">
    <text evidence="5">Belongs to the heme oxygenase family.</text>
</comment>
<accession>Q5R7E3</accession>
<dbReference type="EC" id="1.14.14.18" evidence="1"/>
<dbReference type="EMBL" id="CR860175">
    <property type="protein sequence ID" value="CAH92317.1"/>
    <property type="molecule type" value="mRNA"/>
</dbReference>
<dbReference type="RefSeq" id="NP_001126358.1">
    <property type="nucleotide sequence ID" value="NM_001132886.1"/>
</dbReference>
<dbReference type="SMR" id="Q5R7E3"/>
<dbReference type="FunCoup" id="Q5R7E3">
    <property type="interactions" value="749"/>
</dbReference>
<dbReference type="STRING" id="9601.ENSPPYP00000013121"/>
<dbReference type="GeneID" id="100173339"/>
<dbReference type="KEGG" id="pon:100173339"/>
<dbReference type="CTD" id="3162"/>
<dbReference type="eggNOG" id="KOG4480">
    <property type="taxonomic scope" value="Eukaryota"/>
</dbReference>
<dbReference type="InParanoid" id="Q5R7E3"/>
<dbReference type="OrthoDB" id="652091at2759"/>
<dbReference type="Proteomes" id="UP000001595">
    <property type="component" value="Unplaced"/>
</dbReference>
<dbReference type="GO" id="GO:0005789">
    <property type="term" value="C:endoplasmic reticulum membrane"/>
    <property type="evidence" value="ECO:0000250"/>
    <property type="project" value="UniProtKB"/>
</dbReference>
<dbReference type="GO" id="GO:0020037">
    <property type="term" value="F:heme binding"/>
    <property type="evidence" value="ECO:0007669"/>
    <property type="project" value="TreeGrafter"/>
</dbReference>
<dbReference type="GO" id="GO:0004392">
    <property type="term" value="F:heme oxygenase (decyclizing) activity"/>
    <property type="evidence" value="ECO:0000250"/>
    <property type="project" value="UniProtKB"/>
</dbReference>
<dbReference type="GO" id="GO:0046872">
    <property type="term" value="F:metal ion binding"/>
    <property type="evidence" value="ECO:0007669"/>
    <property type="project" value="UniProtKB-KW"/>
</dbReference>
<dbReference type="GO" id="GO:0006915">
    <property type="term" value="P:apoptotic process"/>
    <property type="evidence" value="ECO:0007669"/>
    <property type="project" value="UniProtKB-KW"/>
</dbReference>
<dbReference type="GO" id="GO:0042167">
    <property type="term" value="P:heme catabolic process"/>
    <property type="evidence" value="ECO:0007669"/>
    <property type="project" value="TreeGrafter"/>
</dbReference>
<dbReference type="GO" id="GO:0006788">
    <property type="term" value="P:heme oxidation"/>
    <property type="evidence" value="ECO:0007669"/>
    <property type="project" value="InterPro"/>
</dbReference>
<dbReference type="GO" id="GO:0110076">
    <property type="term" value="P:negative regulation of ferroptosis"/>
    <property type="evidence" value="ECO:0000250"/>
    <property type="project" value="UniProtKB"/>
</dbReference>
<dbReference type="GO" id="GO:0006979">
    <property type="term" value="P:response to oxidative stress"/>
    <property type="evidence" value="ECO:0007669"/>
    <property type="project" value="TreeGrafter"/>
</dbReference>
<dbReference type="CDD" id="cd00232">
    <property type="entry name" value="HemeO-like"/>
    <property type="match status" value="1"/>
</dbReference>
<dbReference type="FunFam" id="1.20.910.10:FF:000001">
    <property type="entry name" value="Heme oxygenase 1"/>
    <property type="match status" value="1"/>
</dbReference>
<dbReference type="Gene3D" id="1.20.910.10">
    <property type="entry name" value="Heme oxygenase-like"/>
    <property type="match status" value="1"/>
</dbReference>
<dbReference type="InterPro" id="IPR002051">
    <property type="entry name" value="Haem_Oase"/>
</dbReference>
<dbReference type="InterPro" id="IPR016053">
    <property type="entry name" value="Haem_Oase-like"/>
</dbReference>
<dbReference type="InterPro" id="IPR016084">
    <property type="entry name" value="Haem_Oase-like_multi-hlx"/>
</dbReference>
<dbReference type="InterPro" id="IPR018207">
    <property type="entry name" value="Haem_oxygenase_CS"/>
</dbReference>
<dbReference type="PANTHER" id="PTHR10720">
    <property type="entry name" value="HEME OXYGENASE"/>
    <property type="match status" value="1"/>
</dbReference>
<dbReference type="PANTHER" id="PTHR10720:SF1">
    <property type="entry name" value="HEME OXYGENASE 1"/>
    <property type="match status" value="1"/>
</dbReference>
<dbReference type="Pfam" id="PF01126">
    <property type="entry name" value="Heme_oxygenase"/>
    <property type="match status" value="1"/>
</dbReference>
<dbReference type="PIRSF" id="PIRSF000343">
    <property type="entry name" value="Haem_Oase"/>
    <property type="match status" value="1"/>
</dbReference>
<dbReference type="PRINTS" id="PR00088">
    <property type="entry name" value="HAEMOXYGNASE"/>
</dbReference>
<dbReference type="SUPFAM" id="SSF48613">
    <property type="entry name" value="Heme oxygenase-like"/>
    <property type="match status" value="1"/>
</dbReference>
<dbReference type="PROSITE" id="PS00593">
    <property type="entry name" value="HEME_OXYGENASE"/>
    <property type="match status" value="1"/>
</dbReference>
<reference key="1">
    <citation type="submission" date="2004-11" db="EMBL/GenBank/DDBJ databases">
        <authorList>
            <consortium name="The German cDNA consortium"/>
        </authorList>
    </citation>
    <scope>NUCLEOTIDE SEQUENCE [LARGE SCALE MRNA]</scope>
    <source>
        <tissue>Kidney</tissue>
    </source>
</reference>
<feature type="chain" id="PRO_0000317707" description="Heme oxygenase 1">
    <location>
        <begin position="1"/>
        <end position="288"/>
    </location>
</feature>
<feature type="chain" id="PRO_0000455624" description="Heme oxygenase 1 soluble form" evidence="1">
    <location>
        <begin position="1"/>
        <end position="265"/>
    </location>
</feature>
<feature type="topological domain" description="Cytoplasmic" evidence="1">
    <location>
        <begin position="1"/>
        <end position="265"/>
    </location>
</feature>
<feature type="transmembrane region" description="Helical; Anchor for type IV membrane protein" evidence="3">
    <location>
        <begin position="266"/>
        <end position="288"/>
    </location>
</feature>
<feature type="region of interest" description="Disordered" evidence="4">
    <location>
        <begin position="223"/>
        <end position="260"/>
    </location>
</feature>
<feature type="binding site" evidence="1">
    <location>
        <position position="18"/>
    </location>
    <ligand>
        <name>heme b</name>
        <dbReference type="ChEBI" id="CHEBI:60344"/>
    </ligand>
</feature>
<feature type="binding site" description="axial binding residue" evidence="1">
    <location>
        <position position="25"/>
    </location>
    <ligand>
        <name>heme b</name>
        <dbReference type="ChEBI" id="CHEBI:60344"/>
    </ligand>
    <ligandPart>
        <name>Fe</name>
        <dbReference type="ChEBI" id="CHEBI:18248"/>
    </ligandPart>
</feature>
<feature type="binding site" evidence="1">
    <location>
        <position position="134"/>
    </location>
    <ligand>
        <name>heme b</name>
        <dbReference type="ChEBI" id="CHEBI:60344"/>
    </ligand>
</feature>
<feature type="binding site" evidence="1">
    <location>
        <position position="183"/>
    </location>
    <ligand>
        <name>heme b</name>
        <dbReference type="ChEBI" id="CHEBI:60344"/>
    </ligand>
</feature>
<feature type="site" description="Important for catalytic activity" evidence="1">
    <location>
        <position position="140"/>
    </location>
</feature>
<feature type="modified residue" description="Phosphoserine" evidence="1">
    <location>
        <position position="229"/>
    </location>
</feature>
<evidence type="ECO:0000250" key="1">
    <source>
        <dbReference type="UniProtKB" id="P09601"/>
    </source>
</evidence>
<evidence type="ECO:0000250" key="2">
    <source>
        <dbReference type="UniProtKB" id="P14901"/>
    </source>
</evidence>
<evidence type="ECO:0000255" key="3"/>
<evidence type="ECO:0000256" key="4">
    <source>
        <dbReference type="SAM" id="MobiDB-lite"/>
    </source>
</evidence>
<evidence type="ECO:0000305" key="5"/>